<gene>
    <name type="primary">WNT5A</name>
</gene>
<name>WNT5A_PLEWA</name>
<organism>
    <name type="scientific">Pleurodeles waltl</name>
    <name type="common">Iberian ribbed newt</name>
    <dbReference type="NCBI Taxonomy" id="8319"/>
    <lineage>
        <taxon>Eukaryota</taxon>
        <taxon>Metazoa</taxon>
        <taxon>Chordata</taxon>
        <taxon>Craniata</taxon>
        <taxon>Vertebrata</taxon>
        <taxon>Euteleostomi</taxon>
        <taxon>Amphibia</taxon>
        <taxon>Batrachia</taxon>
        <taxon>Caudata</taxon>
        <taxon>Salamandroidea</taxon>
        <taxon>Salamandridae</taxon>
        <taxon>Pleurodelinae</taxon>
        <taxon>Pleurodeles</taxon>
    </lineage>
</organism>
<proteinExistence type="inferred from homology"/>
<keyword id="KW-0217">Developmental protein</keyword>
<keyword id="KW-1015">Disulfide bond</keyword>
<keyword id="KW-0272">Extracellular matrix</keyword>
<keyword id="KW-0325">Glycoprotein</keyword>
<keyword id="KW-0449">Lipoprotein</keyword>
<keyword id="KW-0964">Secreted</keyword>
<keyword id="KW-0732">Signal</keyword>
<keyword id="KW-0879">Wnt signaling pathway</keyword>
<accession>O13267</accession>
<reference key="1">
    <citation type="journal article" date="1997" name="Dev. Dyn.">
        <title>Possible roles for Wnt genes in growth and axial patterning during regeneration of the tail in urodele amphibians.</title>
        <authorList>
            <person name="Caubit X."/>
            <person name="Nicolas S."/>
            <person name="Le Parco Y."/>
        </authorList>
    </citation>
    <scope>NUCLEOTIDE SEQUENCE [GENOMIC DNA]</scope>
</reference>
<comment type="function">
    <text evidence="1">Ligand for members of the frizzled family of seven transmembrane receptors. Can activate or inhibit canonical Wnt signaling, depending on receptor context. Required during embryogenesis for extension of the primary anterior-posterior axis.</text>
</comment>
<comment type="subcellular location">
    <subcellularLocation>
        <location evidence="4">Secreted</location>
        <location evidence="4">Extracellular space</location>
        <location evidence="4">Extracellular matrix</location>
    </subcellularLocation>
    <subcellularLocation>
        <location evidence="4">Secreted</location>
    </subcellularLocation>
</comment>
<comment type="PTM">
    <text evidence="2 5">Palmitoleoylation is required for efficient binding to frizzled receptors. Depalmitoleoylation leads to Wnt signaling pathway inhibition.</text>
</comment>
<comment type="similarity">
    <text evidence="7">Belongs to the Wnt family.</text>
</comment>
<protein>
    <recommendedName>
        <fullName>Protein Wnt-5a</fullName>
        <shortName>PWnt-5a</shortName>
    </recommendedName>
</protein>
<feature type="signal peptide" evidence="6">
    <location>
        <begin position="1"/>
        <end position="20"/>
    </location>
</feature>
<feature type="chain" id="PRO_0000041430" description="Protein Wnt-5a">
    <location>
        <begin position="21"/>
        <end position="359"/>
    </location>
</feature>
<feature type="lipid moiety-binding region" description="O-palmitoleoyl serine; by PORCN" evidence="5">
    <location>
        <position position="223"/>
    </location>
</feature>
<feature type="glycosylation site" description="N-linked (GlcNAc...) asparagine" evidence="6">
    <location>
        <position position="93"/>
    </location>
</feature>
<feature type="glycosylation site" description="N-linked (GlcNAc...) asparagine" evidence="6">
    <location>
        <position position="99"/>
    </location>
</feature>
<feature type="glycosylation site" description="N-linked (GlcNAc...) asparagine" evidence="6">
    <location>
        <position position="291"/>
    </location>
</feature>
<feature type="glycosylation site" description="N-linked (GlcNAc...) asparagine" evidence="6">
    <location>
        <position position="305"/>
    </location>
</feature>
<feature type="disulfide bond" evidence="3">
    <location>
        <begin position="83"/>
        <end position="94"/>
    </location>
</feature>
<feature type="disulfide bond" evidence="3">
    <location>
        <begin position="133"/>
        <end position="141"/>
    </location>
</feature>
<feature type="disulfide bond" evidence="3">
    <location>
        <begin position="143"/>
        <end position="161"/>
    </location>
</feature>
<feature type="disulfide bond" evidence="3">
    <location>
        <begin position="217"/>
        <end position="231"/>
    </location>
</feature>
<feature type="disulfide bond" evidence="3">
    <location>
        <begin position="219"/>
        <end position="226"/>
    </location>
</feature>
<feature type="disulfide bond" evidence="3">
    <location>
        <begin position="288"/>
        <end position="319"/>
    </location>
</feature>
<feature type="disulfide bond" evidence="3">
    <location>
        <begin position="304"/>
        <end position="314"/>
    </location>
</feature>
<feature type="disulfide bond" evidence="3">
    <location>
        <begin position="318"/>
        <end position="358"/>
    </location>
</feature>
<feature type="disulfide bond" evidence="3">
    <location>
        <begin position="334"/>
        <end position="349"/>
    </location>
</feature>
<feature type="disulfide bond" evidence="3">
    <location>
        <begin position="336"/>
        <end position="346"/>
    </location>
</feature>
<feature type="disulfide bond" evidence="3">
    <location>
        <begin position="341"/>
        <end position="342"/>
    </location>
</feature>
<sequence>MASRYLTLAAALLASFLQVDIEANSWWSLAMNPVQIPEAYIVGAQPLCSQLAGLSPGQKKLCQLYQDHMQYIGEGAKTGIKECQYQFRHRRWNCSTVDNISVFGRVMQIGSRETAFTYSISAAGVVNAVSRACRAGELSTCGCSRARRPKDLQRDWLWGGCGDNLDYGYRFAKEFVDAREREKIHQKGSYESSRTLMNLHNNEAGRRTVYNLADVACKCHGVSGSCSLKTCWLQLADFRKVGDFLKEKYDSAASMKLNSRGKLVQVNSRFNPPTTNDLVYVDPSPDYCVRNESTGSMGTQGRLCNKTSEGMDGCELMCCGRGYDQFKTVQTERCHCKFHWCCYVKCKKCTEIVDQFVCK</sequence>
<evidence type="ECO:0000250" key="1">
    <source>
        <dbReference type="UniProtKB" id="P22725"/>
    </source>
</evidence>
<evidence type="ECO:0000250" key="2">
    <source>
        <dbReference type="UniProtKB" id="P27467"/>
    </source>
</evidence>
<evidence type="ECO:0000250" key="3">
    <source>
        <dbReference type="UniProtKB" id="P28026"/>
    </source>
</evidence>
<evidence type="ECO:0000250" key="4">
    <source>
        <dbReference type="UniProtKB" id="P41221"/>
    </source>
</evidence>
<evidence type="ECO:0000250" key="5">
    <source>
        <dbReference type="UniProtKB" id="P56704"/>
    </source>
</evidence>
<evidence type="ECO:0000255" key="6"/>
<evidence type="ECO:0000305" key="7"/>
<dbReference type="EMBL" id="U80582">
    <property type="protein sequence ID" value="AAB58495.1"/>
    <property type="molecule type" value="Genomic_DNA"/>
</dbReference>
<dbReference type="SMR" id="O13267"/>
<dbReference type="GlyCosmos" id="O13267">
    <property type="glycosylation" value="4 sites, No reported glycans"/>
</dbReference>
<dbReference type="GO" id="GO:0005615">
    <property type="term" value="C:extracellular space"/>
    <property type="evidence" value="ECO:0007669"/>
    <property type="project" value="TreeGrafter"/>
</dbReference>
<dbReference type="GO" id="GO:0005125">
    <property type="term" value="F:cytokine activity"/>
    <property type="evidence" value="ECO:0007669"/>
    <property type="project" value="TreeGrafter"/>
</dbReference>
<dbReference type="GO" id="GO:0005109">
    <property type="term" value="F:frizzled binding"/>
    <property type="evidence" value="ECO:0007669"/>
    <property type="project" value="TreeGrafter"/>
</dbReference>
<dbReference type="GO" id="GO:0060070">
    <property type="term" value="P:canonical Wnt signaling pathway"/>
    <property type="evidence" value="ECO:0007669"/>
    <property type="project" value="TreeGrafter"/>
</dbReference>
<dbReference type="GO" id="GO:0045165">
    <property type="term" value="P:cell fate commitment"/>
    <property type="evidence" value="ECO:0007669"/>
    <property type="project" value="TreeGrafter"/>
</dbReference>
<dbReference type="GO" id="GO:0030182">
    <property type="term" value="P:neuron differentiation"/>
    <property type="evidence" value="ECO:0007669"/>
    <property type="project" value="TreeGrafter"/>
</dbReference>
<dbReference type="CDD" id="cd19347">
    <property type="entry name" value="Wnt_Wnt5a"/>
    <property type="match status" value="1"/>
</dbReference>
<dbReference type="FunFam" id="3.30.2460.20:FF:000001">
    <property type="entry name" value="Wnt homolog"/>
    <property type="match status" value="1"/>
</dbReference>
<dbReference type="Gene3D" id="3.30.2460.20">
    <property type="match status" value="1"/>
</dbReference>
<dbReference type="InterPro" id="IPR005817">
    <property type="entry name" value="Wnt"/>
</dbReference>
<dbReference type="InterPro" id="IPR043158">
    <property type="entry name" value="Wnt_C"/>
</dbReference>
<dbReference type="InterPro" id="IPR018161">
    <property type="entry name" value="Wnt_CS"/>
</dbReference>
<dbReference type="PANTHER" id="PTHR12027:SF33">
    <property type="entry name" value="PROTEIN WNT-5A"/>
    <property type="match status" value="1"/>
</dbReference>
<dbReference type="PANTHER" id="PTHR12027">
    <property type="entry name" value="WNT RELATED"/>
    <property type="match status" value="1"/>
</dbReference>
<dbReference type="Pfam" id="PF00110">
    <property type="entry name" value="wnt"/>
    <property type="match status" value="1"/>
</dbReference>
<dbReference type="PRINTS" id="PR01349">
    <property type="entry name" value="WNTPROTEIN"/>
</dbReference>
<dbReference type="SMART" id="SM00097">
    <property type="entry name" value="WNT1"/>
    <property type="match status" value="1"/>
</dbReference>
<dbReference type="PROSITE" id="PS00246">
    <property type="entry name" value="WNT1"/>
    <property type="match status" value="1"/>
</dbReference>